<comment type="catalytic activity">
    <reaction evidence="1">
        <text>(6S)-5,6,7,8-tetrahydrofolate + formate + ATP = (6R)-10-formyltetrahydrofolate + ADP + phosphate</text>
        <dbReference type="Rhea" id="RHEA:20221"/>
        <dbReference type="ChEBI" id="CHEBI:15740"/>
        <dbReference type="ChEBI" id="CHEBI:30616"/>
        <dbReference type="ChEBI" id="CHEBI:43474"/>
        <dbReference type="ChEBI" id="CHEBI:57453"/>
        <dbReference type="ChEBI" id="CHEBI:195366"/>
        <dbReference type="ChEBI" id="CHEBI:456216"/>
        <dbReference type="EC" id="6.3.4.3"/>
    </reaction>
</comment>
<comment type="pathway">
    <text evidence="1">One-carbon metabolism; tetrahydrofolate interconversion.</text>
</comment>
<comment type="similarity">
    <text evidence="1">Belongs to the formate--tetrahydrofolate ligase family.</text>
</comment>
<name>FTHS_STRPJ</name>
<evidence type="ECO:0000255" key="1">
    <source>
        <dbReference type="HAMAP-Rule" id="MF_01543"/>
    </source>
</evidence>
<reference key="1">
    <citation type="journal article" date="2009" name="J. Bacteriol.">
        <title>Role of conjugative elements in the evolution of the multidrug-resistant pandemic clone Streptococcus pneumoniae Spain23F ST81.</title>
        <authorList>
            <person name="Croucher N.J."/>
            <person name="Walker D."/>
            <person name="Romero P."/>
            <person name="Lennard N."/>
            <person name="Paterson G.K."/>
            <person name="Bason N.C."/>
            <person name="Mitchell A.M."/>
            <person name="Quail M.A."/>
            <person name="Andrew P.W."/>
            <person name="Parkhill J."/>
            <person name="Bentley S.D."/>
            <person name="Mitchell T.J."/>
        </authorList>
    </citation>
    <scope>NUCLEOTIDE SEQUENCE [LARGE SCALE GENOMIC DNA]</scope>
    <source>
        <strain>ATCC 700669 / Spain 23F-1</strain>
    </source>
</reference>
<feature type="chain" id="PRO_1000185266" description="Formate--tetrahydrofolate ligase">
    <location>
        <begin position="1"/>
        <end position="556"/>
    </location>
</feature>
<feature type="binding site" evidence="1">
    <location>
        <begin position="65"/>
        <end position="72"/>
    </location>
    <ligand>
        <name>ATP</name>
        <dbReference type="ChEBI" id="CHEBI:30616"/>
    </ligand>
</feature>
<dbReference type="EC" id="6.3.4.3" evidence="1"/>
<dbReference type="EMBL" id="FM211187">
    <property type="protein sequence ID" value="CAR68934.1"/>
    <property type="molecule type" value="Genomic_DNA"/>
</dbReference>
<dbReference type="RefSeq" id="WP_000845292.1">
    <property type="nucleotide sequence ID" value="NC_011900.1"/>
</dbReference>
<dbReference type="SMR" id="B8ZJQ0"/>
<dbReference type="KEGG" id="sne:SPN23F11250"/>
<dbReference type="HOGENOM" id="CLU_003601_3_3_9"/>
<dbReference type="UniPathway" id="UPA00193"/>
<dbReference type="GO" id="GO:0005524">
    <property type="term" value="F:ATP binding"/>
    <property type="evidence" value="ECO:0007669"/>
    <property type="project" value="UniProtKB-UniRule"/>
</dbReference>
<dbReference type="GO" id="GO:0004329">
    <property type="term" value="F:formate-tetrahydrofolate ligase activity"/>
    <property type="evidence" value="ECO:0007669"/>
    <property type="project" value="UniProtKB-UniRule"/>
</dbReference>
<dbReference type="GO" id="GO:0035999">
    <property type="term" value="P:tetrahydrofolate interconversion"/>
    <property type="evidence" value="ECO:0007669"/>
    <property type="project" value="UniProtKB-UniRule"/>
</dbReference>
<dbReference type="CDD" id="cd00477">
    <property type="entry name" value="FTHFS"/>
    <property type="match status" value="1"/>
</dbReference>
<dbReference type="FunFam" id="3.30.1510.10:FF:000001">
    <property type="entry name" value="Formate--tetrahydrofolate ligase"/>
    <property type="match status" value="1"/>
</dbReference>
<dbReference type="FunFam" id="3.10.410.10:FF:000001">
    <property type="entry name" value="Putative formate--tetrahydrofolate ligase"/>
    <property type="match status" value="1"/>
</dbReference>
<dbReference type="Gene3D" id="3.30.1510.10">
    <property type="entry name" value="Domain 2, N(10)-formyltetrahydrofolate synthetase"/>
    <property type="match status" value="1"/>
</dbReference>
<dbReference type="Gene3D" id="3.10.410.10">
    <property type="entry name" value="Formyltetrahydrofolate synthetase, domain 3"/>
    <property type="match status" value="1"/>
</dbReference>
<dbReference type="Gene3D" id="3.40.50.300">
    <property type="entry name" value="P-loop containing nucleotide triphosphate hydrolases"/>
    <property type="match status" value="1"/>
</dbReference>
<dbReference type="HAMAP" id="MF_01543">
    <property type="entry name" value="FTHFS"/>
    <property type="match status" value="1"/>
</dbReference>
<dbReference type="InterPro" id="IPR000559">
    <property type="entry name" value="Formate_THF_ligase"/>
</dbReference>
<dbReference type="InterPro" id="IPR020628">
    <property type="entry name" value="Formate_THF_ligase_CS"/>
</dbReference>
<dbReference type="InterPro" id="IPR027417">
    <property type="entry name" value="P-loop_NTPase"/>
</dbReference>
<dbReference type="NCBIfam" id="NF010030">
    <property type="entry name" value="PRK13505.1"/>
    <property type="match status" value="1"/>
</dbReference>
<dbReference type="Pfam" id="PF01268">
    <property type="entry name" value="FTHFS"/>
    <property type="match status" value="1"/>
</dbReference>
<dbReference type="SUPFAM" id="SSF52540">
    <property type="entry name" value="P-loop containing nucleoside triphosphate hydrolases"/>
    <property type="match status" value="1"/>
</dbReference>
<dbReference type="PROSITE" id="PS00721">
    <property type="entry name" value="FTHFS_1"/>
    <property type="match status" value="1"/>
</dbReference>
<dbReference type="PROSITE" id="PS00722">
    <property type="entry name" value="FTHFS_2"/>
    <property type="match status" value="1"/>
</dbReference>
<organism>
    <name type="scientific">Streptococcus pneumoniae (strain ATCC 700669 / Spain 23F-1)</name>
    <dbReference type="NCBI Taxonomy" id="561276"/>
    <lineage>
        <taxon>Bacteria</taxon>
        <taxon>Bacillati</taxon>
        <taxon>Bacillota</taxon>
        <taxon>Bacilli</taxon>
        <taxon>Lactobacillales</taxon>
        <taxon>Streptococcaceae</taxon>
        <taxon>Streptococcus</taxon>
    </lineage>
</organism>
<protein>
    <recommendedName>
        <fullName evidence="1">Formate--tetrahydrofolate ligase</fullName>
        <ecNumber evidence="1">6.3.4.3</ecNumber>
    </recommendedName>
    <alternativeName>
        <fullName evidence="1">Formyltetrahydrofolate synthetase</fullName>
        <shortName evidence="1">FHS</shortName>
        <shortName evidence="1">FTHFS</shortName>
    </alternativeName>
</protein>
<accession>B8ZJQ0</accession>
<proteinExistence type="inferred from homology"/>
<sequence>MKTDIEIAQSIELKPIVDVVEKLGISYDDLELYGKYKAKLSFDKIRAVESNPVGKLILVTAINPTPAGEGKSTLTIGLADALNKIGKKTMIAIREPSLGPVMGIKGGAAGGGYAQVLPMEDINLHFTGDMHAITTANNALSALIDNHLHQGNELGIDQRRILWKRVVDLNDRALRHVTVGLGGPLNGIPREDGFDITVASEIMAILCLATDIEDLKRRLANIVIGYRYDRTPVSVGDLQVEGALALILKDAIKPNLVQTIYGTPAFVHGGPFANIAHGCNSVLATTTALHLADYTVTEAGFGADLGAEKFLDIKTPNLPTSPDAVVIVATLRALKMNGGVAKDALTEENVEAVRAGFANLKRHVENIRKFGIPAVVAINEFVSDTEAEIAVLKELCASIDVPVELASVWADGAEGGVALAETVVKTIAENPANYKRLYDNDLSVQEKIEKIVTEIYRGSKVNFEKKSQTQIAQIVQNGWDKLPICMAKTQYSFSDNPNALGAPENFEITIRELVPKLGAGFIVALTGDVMTMPGLPKRPAALNMDVESDGTVLGLF</sequence>
<keyword id="KW-0067">ATP-binding</keyword>
<keyword id="KW-0436">Ligase</keyword>
<keyword id="KW-0547">Nucleotide-binding</keyword>
<keyword id="KW-0554">One-carbon metabolism</keyword>
<gene>
    <name evidence="1" type="primary">fhs</name>
    <name type="ordered locus">SPN23F11250</name>
</gene>